<reference key="1">
    <citation type="journal article" date="2005" name="Science">
        <title>The transcriptional landscape of the mammalian genome.</title>
        <authorList>
            <person name="Carninci P."/>
            <person name="Kasukawa T."/>
            <person name="Katayama S."/>
            <person name="Gough J."/>
            <person name="Frith M.C."/>
            <person name="Maeda N."/>
            <person name="Oyama R."/>
            <person name="Ravasi T."/>
            <person name="Lenhard B."/>
            <person name="Wells C."/>
            <person name="Kodzius R."/>
            <person name="Shimokawa K."/>
            <person name="Bajic V.B."/>
            <person name="Brenner S.E."/>
            <person name="Batalov S."/>
            <person name="Forrest A.R."/>
            <person name="Zavolan M."/>
            <person name="Davis M.J."/>
            <person name="Wilming L.G."/>
            <person name="Aidinis V."/>
            <person name="Allen J.E."/>
            <person name="Ambesi-Impiombato A."/>
            <person name="Apweiler R."/>
            <person name="Aturaliya R.N."/>
            <person name="Bailey T.L."/>
            <person name="Bansal M."/>
            <person name="Baxter L."/>
            <person name="Beisel K.W."/>
            <person name="Bersano T."/>
            <person name="Bono H."/>
            <person name="Chalk A.M."/>
            <person name="Chiu K.P."/>
            <person name="Choudhary V."/>
            <person name="Christoffels A."/>
            <person name="Clutterbuck D.R."/>
            <person name="Crowe M.L."/>
            <person name="Dalla E."/>
            <person name="Dalrymple B.P."/>
            <person name="de Bono B."/>
            <person name="Della Gatta G."/>
            <person name="di Bernardo D."/>
            <person name="Down T."/>
            <person name="Engstrom P."/>
            <person name="Fagiolini M."/>
            <person name="Faulkner G."/>
            <person name="Fletcher C.F."/>
            <person name="Fukushima T."/>
            <person name="Furuno M."/>
            <person name="Futaki S."/>
            <person name="Gariboldi M."/>
            <person name="Georgii-Hemming P."/>
            <person name="Gingeras T.R."/>
            <person name="Gojobori T."/>
            <person name="Green R.E."/>
            <person name="Gustincich S."/>
            <person name="Harbers M."/>
            <person name="Hayashi Y."/>
            <person name="Hensch T.K."/>
            <person name="Hirokawa N."/>
            <person name="Hill D."/>
            <person name="Huminiecki L."/>
            <person name="Iacono M."/>
            <person name="Ikeo K."/>
            <person name="Iwama A."/>
            <person name="Ishikawa T."/>
            <person name="Jakt M."/>
            <person name="Kanapin A."/>
            <person name="Katoh M."/>
            <person name="Kawasawa Y."/>
            <person name="Kelso J."/>
            <person name="Kitamura H."/>
            <person name="Kitano H."/>
            <person name="Kollias G."/>
            <person name="Krishnan S.P."/>
            <person name="Kruger A."/>
            <person name="Kummerfeld S.K."/>
            <person name="Kurochkin I.V."/>
            <person name="Lareau L.F."/>
            <person name="Lazarevic D."/>
            <person name="Lipovich L."/>
            <person name="Liu J."/>
            <person name="Liuni S."/>
            <person name="McWilliam S."/>
            <person name="Madan Babu M."/>
            <person name="Madera M."/>
            <person name="Marchionni L."/>
            <person name="Matsuda H."/>
            <person name="Matsuzawa S."/>
            <person name="Miki H."/>
            <person name="Mignone F."/>
            <person name="Miyake S."/>
            <person name="Morris K."/>
            <person name="Mottagui-Tabar S."/>
            <person name="Mulder N."/>
            <person name="Nakano N."/>
            <person name="Nakauchi H."/>
            <person name="Ng P."/>
            <person name="Nilsson R."/>
            <person name="Nishiguchi S."/>
            <person name="Nishikawa S."/>
            <person name="Nori F."/>
            <person name="Ohara O."/>
            <person name="Okazaki Y."/>
            <person name="Orlando V."/>
            <person name="Pang K.C."/>
            <person name="Pavan W.J."/>
            <person name="Pavesi G."/>
            <person name="Pesole G."/>
            <person name="Petrovsky N."/>
            <person name="Piazza S."/>
            <person name="Reed J."/>
            <person name="Reid J.F."/>
            <person name="Ring B.Z."/>
            <person name="Ringwald M."/>
            <person name="Rost B."/>
            <person name="Ruan Y."/>
            <person name="Salzberg S.L."/>
            <person name="Sandelin A."/>
            <person name="Schneider C."/>
            <person name="Schoenbach C."/>
            <person name="Sekiguchi K."/>
            <person name="Semple C.A."/>
            <person name="Seno S."/>
            <person name="Sessa L."/>
            <person name="Sheng Y."/>
            <person name="Shibata Y."/>
            <person name="Shimada H."/>
            <person name="Shimada K."/>
            <person name="Silva D."/>
            <person name="Sinclair B."/>
            <person name="Sperling S."/>
            <person name="Stupka E."/>
            <person name="Sugiura K."/>
            <person name="Sultana R."/>
            <person name="Takenaka Y."/>
            <person name="Taki K."/>
            <person name="Tammoja K."/>
            <person name="Tan S.L."/>
            <person name="Tang S."/>
            <person name="Taylor M.S."/>
            <person name="Tegner J."/>
            <person name="Teichmann S.A."/>
            <person name="Ueda H.R."/>
            <person name="van Nimwegen E."/>
            <person name="Verardo R."/>
            <person name="Wei C.L."/>
            <person name="Yagi K."/>
            <person name="Yamanishi H."/>
            <person name="Zabarovsky E."/>
            <person name="Zhu S."/>
            <person name="Zimmer A."/>
            <person name="Hide W."/>
            <person name="Bult C."/>
            <person name="Grimmond S.M."/>
            <person name="Teasdale R.D."/>
            <person name="Liu E.T."/>
            <person name="Brusic V."/>
            <person name="Quackenbush J."/>
            <person name="Wahlestedt C."/>
            <person name="Mattick J.S."/>
            <person name="Hume D.A."/>
            <person name="Kai C."/>
            <person name="Sasaki D."/>
            <person name="Tomaru Y."/>
            <person name="Fukuda S."/>
            <person name="Kanamori-Katayama M."/>
            <person name="Suzuki M."/>
            <person name="Aoki J."/>
            <person name="Arakawa T."/>
            <person name="Iida J."/>
            <person name="Imamura K."/>
            <person name="Itoh M."/>
            <person name="Kato T."/>
            <person name="Kawaji H."/>
            <person name="Kawagashira N."/>
            <person name="Kawashima T."/>
            <person name="Kojima M."/>
            <person name="Kondo S."/>
            <person name="Konno H."/>
            <person name="Nakano K."/>
            <person name="Ninomiya N."/>
            <person name="Nishio T."/>
            <person name="Okada M."/>
            <person name="Plessy C."/>
            <person name="Shibata K."/>
            <person name="Shiraki T."/>
            <person name="Suzuki S."/>
            <person name="Tagami M."/>
            <person name="Waki K."/>
            <person name="Watahiki A."/>
            <person name="Okamura-Oho Y."/>
            <person name="Suzuki H."/>
            <person name="Kawai J."/>
            <person name="Hayashizaki Y."/>
        </authorList>
    </citation>
    <scope>NUCLEOTIDE SEQUENCE [LARGE SCALE MRNA]</scope>
    <source>
        <strain>C57BL/6J</strain>
        <tissue>Amnion</tissue>
        <tissue>Thymus</tissue>
    </source>
</reference>
<reference key="2">
    <citation type="journal article" date="2004" name="Genome Res.">
        <title>The status, quality, and expansion of the NIH full-length cDNA project: the Mammalian Gene Collection (MGC).</title>
        <authorList>
            <consortium name="The MGC Project Team"/>
        </authorList>
    </citation>
    <scope>NUCLEOTIDE SEQUENCE [LARGE SCALE MRNA]</scope>
    <source>
        <strain>Czech II</strain>
        <tissue>Kidney</tissue>
        <tissue>Liver</tissue>
        <tissue>Mammary tumor</tissue>
    </source>
</reference>
<reference key="3">
    <citation type="journal article" date="2007" name="Traffic">
        <title>Hook2 localizes to the centrosome, binds directly to centriolin/CEP110 and contributes to centrosomal function.</title>
        <authorList>
            <person name="Szebenyi G."/>
            <person name="Hall B."/>
            <person name="Yu R."/>
            <person name="Hashim A.I."/>
            <person name="Kraemer H."/>
        </authorList>
    </citation>
    <scope>SUBCELLULAR LOCATION</scope>
    <scope>TISSUE SPECIFICITY</scope>
</reference>
<reference key="4">
    <citation type="journal article" date="2015" name="PLoS Genet.">
        <title>LRGUK-1 is required for basal body and manchette function during spermatogenesis and male fertility.</title>
        <authorList>
            <person name="Liu Y."/>
            <person name="DeBoer K."/>
            <person name="de Kretser D.M."/>
            <person name="O'Donnell L."/>
            <person name="O'Connor A.E."/>
            <person name="Merriner D.J."/>
            <person name="Okuda H."/>
            <person name="Whittle B."/>
            <person name="Jans D.A."/>
            <person name="Efthymiadis A."/>
            <person name="McLachlan R.I."/>
            <person name="Ormandy C.J."/>
            <person name="Goodnow C.C."/>
            <person name="Jamsai D."/>
            <person name="O'Bryan M.K."/>
        </authorList>
    </citation>
    <scope>INTERACTION WITH LRGUK</scope>
    <scope>SUBCELLULAR LOCATION</scope>
</reference>
<reference key="5">
    <citation type="journal article" date="2017" name="Eur. J. Cell Biol.">
        <title>Ccdc181 is a microtubule-binding protein that interacts with Hook1 in haploid male germ cells and localizes to the sperm tail and motile cilia.</title>
        <authorList>
            <person name="Schwarz T."/>
            <person name="Prieler B."/>
            <person name="Schmid J.A."/>
            <person name="Grzmil P."/>
            <person name="Neesen J."/>
        </authorList>
    </citation>
    <scope>INTERACTION WITH CCDC181</scope>
</reference>
<reference key="6">
    <citation type="journal article" date="2017" name="FASEB J.">
        <title>LRGUK1 is part of a multiprotein complex required for manchette function and male fertility.</title>
        <authorList>
            <person name="Okuda H."/>
            <person name="DeBoer K."/>
            <person name="O'Connor A.E."/>
            <person name="Merriner D.J."/>
            <person name="Jamsai D."/>
            <person name="O'Bryan M.K."/>
        </authorList>
    </citation>
    <scope>INTERACTION WITH LRGUK</scope>
    <scope>SUBCELLULAR LOCATION</scope>
</reference>
<keyword id="KW-0175">Coiled coil</keyword>
<keyword id="KW-0963">Cytoplasm</keyword>
<keyword id="KW-0206">Cytoskeleton</keyword>
<keyword id="KW-0333">Golgi apparatus</keyword>
<keyword id="KW-0493">Microtubule</keyword>
<keyword id="KW-0597">Phosphoprotein</keyword>
<keyword id="KW-0653">Protein transport</keyword>
<keyword id="KW-1185">Reference proteome</keyword>
<keyword id="KW-0813">Transport</keyword>
<protein>
    <recommendedName>
        <fullName>Protein Hook homolog 2</fullName>
        <shortName>mHK2</shortName>
    </recommendedName>
</protein>
<proteinExistence type="evidence at protein level"/>
<organism>
    <name type="scientific">Mus musculus</name>
    <name type="common">Mouse</name>
    <dbReference type="NCBI Taxonomy" id="10090"/>
    <lineage>
        <taxon>Eukaryota</taxon>
        <taxon>Metazoa</taxon>
        <taxon>Chordata</taxon>
        <taxon>Craniata</taxon>
        <taxon>Vertebrata</taxon>
        <taxon>Euteleostomi</taxon>
        <taxon>Mammalia</taxon>
        <taxon>Eutheria</taxon>
        <taxon>Euarchontoglires</taxon>
        <taxon>Glires</taxon>
        <taxon>Rodentia</taxon>
        <taxon>Myomorpha</taxon>
        <taxon>Muroidea</taxon>
        <taxon>Muridae</taxon>
        <taxon>Murinae</taxon>
        <taxon>Mus</taxon>
        <taxon>Mus</taxon>
    </lineage>
</organism>
<gene>
    <name type="primary">Hook2</name>
</gene>
<comment type="function">
    <text evidence="2">Component of the FTS/Hook/FHIP complex (FHF complex). The FHF complex may function to promote vesicle trafficking and/or fusion via the homotypic vesicular protein sorting complex (the HOPS complex). Contributes to the establishment and maintenance of centrosome function. May function in the positioning or formation of aggresomes, which are pericentriolar accumulations of misfolded proteins, proteasomes and chaperones. FHF complex promotes the distribution of AP-4 complex to the perinuclear area of the cell.</text>
</comment>
<comment type="subunit">
    <text evidence="2 6 7 8">Self-associates (By similarity). Component of the FTS/Hook/FHIP complex (FHF complex), composed of AKTIP/FTS, FHIP1B, and one or more members of the Hook family of proteins HOOK1, HOOK2, and HOOK3 (By similarity). May interact directly with AKTIP/FTS, HOOK1 and HOOK3 (By similarity). Associates with several subunits of the homotypic vesicular sorting complex (the HOPS complex) including VPS16 and VPS41; these interactions may be indirect (By similarity). Interacts with CNTRL (By similarity). Interacts with microtubules (By similarity). Interacts with ZC3H14 (By similarity). Interacts with LRGUK (via guanylate kinase-like domain) (PubMed:25781171, PubMed:28003339). Interacts with CCDC181 (PubMed:28283191). Interacts with AP4M1; the interaction is direct, mediates the interaction between FTS-Hook-FHIP (FHF) complex and AP-4 and the perinuclear distribution of AP-4 (By similarity).</text>
</comment>
<comment type="subcellular location">
    <subcellularLocation>
        <location evidence="5 6">Cytoplasm</location>
        <location evidence="5 6">Cytoskeleton</location>
        <location evidence="5 6">Microtubule organizing center</location>
        <location evidence="5 6">Centrosome</location>
    </subcellularLocation>
    <subcellularLocation>
        <location evidence="5">Cytoplasm</location>
    </subcellularLocation>
    <subcellularLocation>
        <location evidence="5 7">Cytoplasm</location>
        <location evidence="5 7">Cytoskeleton</location>
    </subcellularLocation>
    <subcellularLocation>
        <location evidence="2">Golgi apparatus</location>
        <location evidence="2">trans-Golgi network</location>
    </subcellularLocation>
    <text evidence="2 7">Colocalizes with aggresomes, which are aggregates of misfolded proteins, at the centrosome. Also localizes to punctate cytoplasmic foci which do not appear to overlap with early or late endosomes, the endoplasmic reticulum, multivesicular bodies (MVBs), lysosome, or mitochondria (By similarity). Often found in close association with microtubules (By similarity). Localizes to the manchette in elongating spermatids (PubMed:28003339).</text>
</comment>
<comment type="tissue specificity">
    <text evidence="5">Expressed in brain, cerebellum, kidney, liver and heart, with highest levels in heart and kidney (at protein level).</text>
</comment>
<comment type="similarity">
    <text evidence="9">Belongs to the hook family.</text>
</comment>
<comment type="sequence caution" evidence="9">
    <conflict type="erroneous initiation">
        <sequence resource="EMBL-CDS" id="AAH02226"/>
    </conflict>
    <text>Extended N-terminus.</text>
</comment>
<evidence type="ECO:0000250" key="1"/>
<evidence type="ECO:0000250" key="2">
    <source>
        <dbReference type="UniProtKB" id="Q96ED9"/>
    </source>
</evidence>
<evidence type="ECO:0000255" key="3"/>
<evidence type="ECO:0000255" key="4">
    <source>
        <dbReference type="PROSITE-ProRule" id="PRU00044"/>
    </source>
</evidence>
<evidence type="ECO:0000269" key="5">
    <source>
    </source>
</evidence>
<evidence type="ECO:0000269" key="6">
    <source>
    </source>
</evidence>
<evidence type="ECO:0000269" key="7">
    <source>
    </source>
</evidence>
<evidence type="ECO:0000269" key="8">
    <source>
    </source>
</evidence>
<evidence type="ECO:0000305" key="9"/>
<accession>Q7TMK6</accession>
<accession>Q66JV2</accession>
<accession>Q8BY47</accession>
<accession>Q8R347</accession>
<accession>Q8VCN4</accession>
<accession>Q99LU2</accession>
<feature type="chain" id="PRO_0000219195" description="Protein Hook homolog 2">
    <location>
        <begin position="1"/>
        <end position="716"/>
    </location>
</feature>
<feature type="domain" description="Calponin-homology (CH)" evidence="4">
    <location>
        <begin position="6"/>
        <end position="122"/>
    </location>
</feature>
<feature type="region of interest" description="Sufficient for interaction with microtubules" evidence="1">
    <location>
        <begin position="1"/>
        <end position="546"/>
    </location>
</feature>
<feature type="region of interest" description="Required for localization to the centrosome and induction of aggresome formation" evidence="1">
    <location>
        <begin position="1"/>
        <end position="161"/>
    </location>
</feature>
<feature type="region of interest" description="Required for localization to the centrosome and induction of aggresome formation" evidence="1">
    <location>
        <begin position="533"/>
        <end position="716"/>
    </location>
</feature>
<feature type="region of interest" description="Sufficient for interaction with CNTRL" evidence="1">
    <location>
        <begin position="582"/>
        <end position="716"/>
    </location>
</feature>
<feature type="coiled-coil region" evidence="3">
    <location>
        <begin position="188"/>
        <end position="427"/>
    </location>
</feature>
<feature type="coiled-coil region" evidence="3">
    <location>
        <begin position="455"/>
        <end position="605"/>
    </location>
</feature>
<feature type="modified residue" description="Phosphoserine" evidence="2">
    <location>
        <position position="163"/>
    </location>
</feature>
<feature type="sequence conflict" description="In Ref. 2; AAH19486." evidence="9" ref="2">
    <original>N</original>
    <variation>D</variation>
    <location>
        <position position="51"/>
    </location>
</feature>
<feature type="sequence conflict" description="In Ref. 2; AAH19486." evidence="9" ref="2">
    <original>T</original>
    <variation>A</variation>
    <location>
        <position position="158"/>
    </location>
</feature>
<feature type="sequence conflict" description="In Ref. 2; AAH19486/AAH26609." evidence="9" ref="2">
    <original>A</original>
    <variation>T</variation>
    <location>
        <position position="312"/>
    </location>
</feature>
<feature type="sequence conflict" description="In Ref. 2; AAH55881." evidence="9" ref="2">
    <location>
        <position position="574"/>
    </location>
</feature>
<feature type="sequence conflict" description="In Ref. 1; BAC31143." evidence="9" ref="1">
    <original>L</original>
    <variation>M</variation>
    <location>
        <position position="694"/>
    </location>
</feature>
<name>HOOK2_MOUSE</name>
<sequence length="716" mass="83366">MSVDKAELCGSLLTWLQTFQVSPPCASPQDLSSGLAIAHVLNQIDPSWFNNEWLQGISEDSSPSWRLKVRKLEKILQSLVEYSKNVLGHPVSDQHLPDVSLIGEFSNPAELGKLLQLVLGCAISCEKKQEYIQRIMTLEESVQHVVMEAIQELMTKDTPDSLSPENYGNFDTQSRRYYFLSEEVEEGDHLQQHYLDLERQLLLLSEEKQNLAQENAALRERVGRSEVESAPGLTAKKLLLLQSQLEQLQEENFRLESSREDDRLRCLELEREVAELQQRNQALTSLSQEAQALKDEMDELRQSSERARQLEATLNSCRRRLGELQELRRQVRQLEERNAGHAERTRQLEEELRRAGSLRAQLEAQRRQVQELQGQWQEEAMKAEKWLFECRNLEEKCDLVTKEKERLLTERDSLREANEELRCAQLQPRGLAQADLSLDPTPSGLENLAAEILPAELRETLVRLQLENKRLCQQEAADRERQEELQRHLEEANRARHGLEAQQRLNQQQLSELRAQVEELQKALQEQGGKTEDPTLLKRKLEDHLQKLHEADLELQRKREYIEELEPPTDSSTARRIEELQDSLQKKDADLRAMEERYRRYVDKARTVIQTLEPKQRPPTVVSPEFHTLRSQLWERNLRIRQMEMDYEKSRRRQEQEEKLLISAWYSMGMALEHRAGEEHAPAHAQSFLAQQRLATNARRGPLGRQALSLRPTDKH</sequence>
<dbReference type="EMBL" id="AK042048">
    <property type="protein sequence ID" value="BAC31143.1"/>
    <property type="molecule type" value="mRNA"/>
</dbReference>
<dbReference type="EMBL" id="AK145768">
    <property type="protein sequence ID" value="BAE26639.1"/>
    <property type="molecule type" value="mRNA"/>
</dbReference>
<dbReference type="EMBL" id="AK169073">
    <property type="protein sequence ID" value="BAE40859.1"/>
    <property type="molecule type" value="mRNA"/>
</dbReference>
<dbReference type="EMBL" id="BC002226">
    <property type="protein sequence ID" value="AAH02226.1"/>
    <property type="status" value="ALT_INIT"/>
    <property type="molecule type" value="mRNA"/>
</dbReference>
<dbReference type="EMBL" id="BC019486">
    <property type="protein sequence ID" value="AAH19486.1"/>
    <property type="molecule type" value="mRNA"/>
</dbReference>
<dbReference type="EMBL" id="BC026609">
    <property type="protein sequence ID" value="AAH26609.1"/>
    <property type="molecule type" value="mRNA"/>
</dbReference>
<dbReference type="EMBL" id="BC055881">
    <property type="protein sequence ID" value="AAH55881.1"/>
    <property type="molecule type" value="mRNA"/>
</dbReference>
<dbReference type="EMBL" id="BC080744">
    <property type="protein sequence ID" value="AAH80744.1"/>
    <property type="molecule type" value="mRNA"/>
</dbReference>
<dbReference type="CCDS" id="CCDS22489.1"/>
<dbReference type="RefSeq" id="NP_001161463.1">
    <property type="nucleotide sequence ID" value="NM_001167991.1"/>
</dbReference>
<dbReference type="RefSeq" id="NP_573518.2">
    <property type="nucleotide sequence ID" value="NM_133255.4"/>
</dbReference>
<dbReference type="SMR" id="Q7TMK6"/>
<dbReference type="BioGRID" id="228463">
    <property type="interactions" value="4"/>
</dbReference>
<dbReference type="FunCoup" id="Q7TMK6">
    <property type="interactions" value="1114"/>
</dbReference>
<dbReference type="IntAct" id="Q7TMK6">
    <property type="interactions" value="3"/>
</dbReference>
<dbReference type="STRING" id="10090.ENSMUSP00000067752"/>
<dbReference type="GlyGen" id="Q7TMK6">
    <property type="glycosylation" value="1 site"/>
</dbReference>
<dbReference type="iPTMnet" id="Q7TMK6"/>
<dbReference type="PhosphoSitePlus" id="Q7TMK6"/>
<dbReference type="SwissPalm" id="Q7TMK6"/>
<dbReference type="PaxDb" id="10090-ENSMUSP00000067752"/>
<dbReference type="ProteomicsDB" id="273377"/>
<dbReference type="Pumba" id="Q7TMK6"/>
<dbReference type="Antibodypedia" id="26165">
    <property type="antibodies" value="109 antibodies from 22 providers"/>
</dbReference>
<dbReference type="DNASU" id="170833"/>
<dbReference type="Ensembl" id="ENSMUST00000064495.8">
    <property type="protein sequence ID" value="ENSMUSP00000067752.7"/>
    <property type="gene ID" value="ENSMUSG00000052566.9"/>
</dbReference>
<dbReference type="GeneID" id="170833"/>
<dbReference type="KEGG" id="mmu:170833"/>
<dbReference type="UCSC" id="uc009moq.2">
    <property type="organism name" value="mouse"/>
</dbReference>
<dbReference type="AGR" id="MGI:2181664"/>
<dbReference type="CTD" id="29911"/>
<dbReference type="MGI" id="MGI:2181664">
    <property type="gene designation" value="Hook2"/>
</dbReference>
<dbReference type="VEuPathDB" id="HostDB:ENSMUSG00000052566"/>
<dbReference type="eggNOG" id="ENOG502QTJ1">
    <property type="taxonomic scope" value="Eukaryota"/>
</dbReference>
<dbReference type="GeneTree" id="ENSGT00940000160152"/>
<dbReference type="HOGENOM" id="CLU_011214_1_0_1"/>
<dbReference type="InParanoid" id="Q7TMK6"/>
<dbReference type="OMA" id="RGQLDTY"/>
<dbReference type="OrthoDB" id="49395at2759"/>
<dbReference type="PhylomeDB" id="Q7TMK6"/>
<dbReference type="TreeFam" id="TF320231"/>
<dbReference type="BioGRID-ORCS" id="170833">
    <property type="hits" value="2 hits in 77 CRISPR screens"/>
</dbReference>
<dbReference type="CD-CODE" id="01CA17F3">
    <property type="entry name" value="Centrosome"/>
</dbReference>
<dbReference type="ChiTaRS" id="Hook2">
    <property type="organism name" value="mouse"/>
</dbReference>
<dbReference type="PRO" id="PR:Q7TMK6"/>
<dbReference type="Proteomes" id="UP000000589">
    <property type="component" value="Chromosome 8"/>
</dbReference>
<dbReference type="RNAct" id="Q7TMK6">
    <property type="molecule type" value="protein"/>
</dbReference>
<dbReference type="Bgee" id="ENSMUSG00000052566">
    <property type="expression patterns" value="Expressed in submandibular gland primordium and 178 other cell types or tissues"/>
</dbReference>
<dbReference type="ExpressionAtlas" id="Q7TMK6">
    <property type="expression patterns" value="baseline and differential"/>
</dbReference>
<dbReference type="GO" id="GO:0005813">
    <property type="term" value="C:centrosome"/>
    <property type="evidence" value="ECO:0007669"/>
    <property type="project" value="UniProtKB-SubCell"/>
</dbReference>
<dbReference type="GO" id="GO:0005829">
    <property type="term" value="C:cytosol"/>
    <property type="evidence" value="ECO:0007669"/>
    <property type="project" value="Ensembl"/>
</dbReference>
<dbReference type="GO" id="GO:0070695">
    <property type="term" value="C:FHF complex"/>
    <property type="evidence" value="ECO:0000250"/>
    <property type="project" value="UniProtKB"/>
</dbReference>
<dbReference type="GO" id="GO:0030897">
    <property type="term" value="C:HOPS complex"/>
    <property type="evidence" value="ECO:0007669"/>
    <property type="project" value="Ensembl"/>
</dbReference>
<dbReference type="GO" id="GO:0005874">
    <property type="term" value="C:microtubule"/>
    <property type="evidence" value="ECO:0007669"/>
    <property type="project" value="UniProtKB-KW"/>
</dbReference>
<dbReference type="GO" id="GO:0005802">
    <property type="term" value="C:trans-Golgi network"/>
    <property type="evidence" value="ECO:0000250"/>
    <property type="project" value="UniProtKB"/>
</dbReference>
<dbReference type="GO" id="GO:0042802">
    <property type="term" value="F:identical protein binding"/>
    <property type="evidence" value="ECO:0007669"/>
    <property type="project" value="Ensembl"/>
</dbReference>
<dbReference type="GO" id="GO:0008017">
    <property type="term" value="F:microtubule binding"/>
    <property type="evidence" value="ECO:0007669"/>
    <property type="project" value="InterPro"/>
</dbReference>
<dbReference type="GO" id="GO:0031122">
    <property type="term" value="P:cytoplasmic microtubule organization"/>
    <property type="evidence" value="ECO:0007669"/>
    <property type="project" value="InterPro"/>
</dbReference>
<dbReference type="GO" id="GO:0030705">
    <property type="term" value="P:cytoskeleton-dependent intracellular transport"/>
    <property type="evidence" value="ECO:0007669"/>
    <property type="project" value="InterPro"/>
</dbReference>
<dbReference type="GO" id="GO:0045022">
    <property type="term" value="P:early endosome to late endosome transport"/>
    <property type="evidence" value="ECO:0000250"/>
    <property type="project" value="UniProtKB"/>
</dbReference>
<dbReference type="GO" id="GO:0007032">
    <property type="term" value="P:endosome organization"/>
    <property type="evidence" value="ECO:0000250"/>
    <property type="project" value="UniProtKB"/>
</dbReference>
<dbReference type="GO" id="GO:0008333">
    <property type="term" value="P:endosome to lysosome transport"/>
    <property type="evidence" value="ECO:0000250"/>
    <property type="project" value="UniProtKB"/>
</dbReference>
<dbReference type="GO" id="GO:0007040">
    <property type="term" value="P:lysosome organization"/>
    <property type="evidence" value="ECO:0000250"/>
    <property type="project" value="UniProtKB"/>
</dbReference>
<dbReference type="GO" id="GO:1905719">
    <property type="term" value="P:protein localization to perinuclear region of cytoplasm"/>
    <property type="evidence" value="ECO:0000250"/>
    <property type="project" value="UniProtKB"/>
</dbReference>
<dbReference type="GO" id="GO:0015031">
    <property type="term" value="P:protein transport"/>
    <property type="evidence" value="ECO:0007669"/>
    <property type="project" value="UniProtKB-KW"/>
</dbReference>
<dbReference type="FunFam" id="1.10.418.10:FF:000024">
    <property type="entry name" value="Hook homolog 3 (Drosophila)"/>
    <property type="match status" value="1"/>
</dbReference>
<dbReference type="Gene3D" id="1.10.418.10">
    <property type="entry name" value="Calponin-like domain"/>
    <property type="match status" value="1"/>
</dbReference>
<dbReference type="InterPro" id="IPR001715">
    <property type="entry name" value="CH_dom"/>
</dbReference>
<dbReference type="InterPro" id="IPR036872">
    <property type="entry name" value="CH_dom_sf"/>
</dbReference>
<dbReference type="InterPro" id="IPR008636">
    <property type="entry name" value="Hook_C"/>
</dbReference>
<dbReference type="InterPro" id="IPR043936">
    <property type="entry name" value="HOOK_N"/>
</dbReference>
<dbReference type="PANTHER" id="PTHR18947">
    <property type="entry name" value="HOOK PROTEINS"/>
    <property type="match status" value="1"/>
</dbReference>
<dbReference type="PANTHER" id="PTHR18947:SF37">
    <property type="entry name" value="PROTEIN HOOK HOMOLOG 2"/>
    <property type="match status" value="1"/>
</dbReference>
<dbReference type="Pfam" id="PF05622">
    <property type="entry name" value="HOOK"/>
    <property type="match status" value="1"/>
</dbReference>
<dbReference type="Pfam" id="PF19047">
    <property type="entry name" value="HOOK_N"/>
    <property type="match status" value="1"/>
</dbReference>
<dbReference type="SUPFAM" id="SSF116907">
    <property type="entry name" value="Hook domain"/>
    <property type="match status" value="1"/>
</dbReference>
<dbReference type="PROSITE" id="PS50021">
    <property type="entry name" value="CH"/>
    <property type="match status" value="1"/>
</dbReference>